<accession>Q7T277</accession>
<proteinExistence type="evidence at transcript level"/>
<dbReference type="EMBL" id="AY113841">
    <property type="protein sequence ID" value="AAM62136.1"/>
    <property type="molecule type" value="mRNA"/>
</dbReference>
<dbReference type="SMR" id="Q7T277"/>
<dbReference type="GO" id="GO:0005789">
    <property type="term" value="C:endoplasmic reticulum membrane"/>
    <property type="evidence" value="ECO:0000250"/>
    <property type="project" value="UniProtKB"/>
</dbReference>
<dbReference type="GO" id="GO:0039019">
    <property type="term" value="P:pronephric nephron development"/>
    <property type="evidence" value="ECO:0000250"/>
    <property type="project" value="UniProtKB"/>
</dbReference>
<dbReference type="GO" id="GO:0045047">
    <property type="term" value="P:protein targeting to ER"/>
    <property type="evidence" value="ECO:0000250"/>
    <property type="project" value="UniProtKB"/>
</dbReference>
<dbReference type="GO" id="GO:0015031">
    <property type="term" value="P:protein transport"/>
    <property type="evidence" value="ECO:0007669"/>
    <property type="project" value="UniProtKB-KW"/>
</dbReference>
<dbReference type="FunFam" id="1.10.3370.10:FF:000002">
    <property type="entry name" value="Transport Sec61 subunit alpha isoform 2"/>
    <property type="match status" value="1"/>
</dbReference>
<dbReference type="Gene3D" id="1.10.3370.10">
    <property type="entry name" value="SecY subunit domain"/>
    <property type="match status" value="1"/>
</dbReference>
<dbReference type="InterPro" id="IPR002208">
    <property type="entry name" value="SecY/SEC61-alpha"/>
</dbReference>
<dbReference type="InterPro" id="IPR030659">
    <property type="entry name" value="SecY_CS"/>
</dbReference>
<dbReference type="InterPro" id="IPR023201">
    <property type="entry name" value="SecY_dom_sf"/>
</dbReference>
<dbReference type="InterPro" id="IPR019561">
    <property type="entry name" value="Translocon_Sec61/SecY_plug_dom"/>
</dbReference>
<dbReference type="NCBIfam" id="TIGR00967">
    <property type="entry name" value="3a0501s007"/>
    <property type="match status" value="1"/>
</dbReference>
<dbReference type="NCBIfam" id="NF006341">
    <property type="entry name" value="PRK08568.1-5"/>
    <property type="match status" value="1"/>
</dbReference>
<dbReference type="PANTHER" id="PTHR10906">
    <property type="entry name" value="SECY/SEC61-ALPHA FAMILY MEMBER"/>
    <property type="match status" value="1"/>
</dbReference>
<dbReference type="Pfam" id="PF10559">
    <property type="entry name" value="Plug_translocon"/>
    <property type="match status" value="1"/>
</dbReference>
<dbReference type="Pfam" id="PF00344">
    <property type="entry name" value="SecY"/>
    <property type="match status" value="1"/>
</dbReference>
<dbReference type="PIRSF" id="PIRSF004557">
    <property type="entry name" value="SecY"/>
    <property type="match status" value="1"/>
</dbReference>
<dbReference type="SUPFAM" id="SSF103491">
    <property type="entry name" value="Preprotein translocase SecY subunit"/>
    <property type="match status" value="1"/>
</dbReference>
<dbReference type="PROSITE" id="PS00755">
    <property type="entry name" value="SECY_1"/>
    <property type="match status" value="1"/>
</dbReference>
<dbReference type="PROSITE" id="PS00756">
    <property type="entry name" value="SECY_2"/>
    <property type="match status" value="1"/>
</dbReference>
<sequence length="476" mass="52268">MGIKFLEVIKPFCAVLPEIQKPERKIQFREKVLWTAITLFIFLVCCQIPLFGIMSSDSADPFYWMRVILASNRGTLMELGISPIVTSGLIMQLLAGAKIIEVGDTPKDRALFNGAQKLFGMIITIGQAIVYVMTGMYGDPSEMGAGICLLIIIQLFVAGLIVLLLDELLQKGYGLGSGISLFIATNICETIVWKAFSPTTVNTGRGTEFEGAIIALFHLLATRTDKVRALREAFYRQNLPNILNLIATVFVFAVVIYFQGFRVDLPIKSARYRGQYNTYPIKLFYTSNIPIILQSALVSNLYVISQMLSTRFSGNFLVNLLGTWSDATSGGPARAYPVAGLCYYLSPPESFGSVLDDPVHAAIYIVFMLGSCAFFSKTWIEVSGSSAKDVAKQLKEQQMVMRGHRETSMVHELNRYIPTAAAFGGLCIGGLSVMADFLGAIGSGTGILLAVTIIYQYFEIFVKEQSEMGSMGALLF</sequence>
<feature type="initiator methionine" description="Removed" evidence="1">
    <location>
        <position position="1"/>
    </location>
</feature>
<feature type="chain" id="PRO_0000131801" description="Protein transport protein Sec61 subunit alpha">
    <location>
        <begin position="2"/>
        <end position="476"/>
    </location>
</feature>
<feature type="topological domain" description="Cytoplasmic" evidence="4">
    <location>
        <begin position="2"/>
        <end position="33"/>
    </location>
</feature>
<feature type="transmembrane region" description="Helical" evidence="4">
    <location>
        <begin position="34"/>
        <end position="53"/>
    </location>
</feature>
<feature type="topological domain" description="Lumenal" evidence="4">
    <location>
        <begin position="54"/>
        <end position="76"/>
    </location>
</feature>
<feature type="transmembrane region" description="Helical" evidence="4">
    <location>
        <begin position="77"/>
        <end position="96"/>
    </location>
</feature>
<feature type="topological domain" description="Cytoplasmic" evidence="4">
    <location>
        <begin position="97"/>
        <end position="117"/>
    </location>
</feature>
<feature type="transmembrane region" description="Helical" evidence="4">
    <location>
        <begin position="118"/>
        <end position="138"/>
    </location>
</feature>
<feature type="topological domain" description="Lumenal" evidence="4">
    <location>
        <begin position="139"/>
        <end position="144"/>
    </location>
</feature>
<feature type="transmembrane region" description="Helical" evidence="4">
    <location>
        <begin position="145"/>
        <end position="165"/>
    </location>
</feature>
<feature type="topological domain" description="Cytoplasmic" evidence="4">
    <location>
        <begin position="166"/>
        <end position="172"/>
    </location>
</feature>
<feature type="transmembrane region" description="Helical" evidence="4">
    <location>
        <begin position="173"/>
        <end position="193"/>
    </location>
</feature>
<feature type="topological domain" description="Lumenal" evidence="4">
    <location>
        <begin position="194"/>
        <end position="240"/>
    </location>
</feature>
<feature type="transmembrane region" description="Helical" evidence="4">
    <location>
        <begin position="241"/>
        <end position="261"/>
    </location>
</feature>
<feature type="topological domain" description="Cytoplasmic" evidence="4">
    <location>
        <begin position="262"/>
        <end position="288"/>
    </location>
</feature>
<feature type="transmembrane region" description="Helical" evidence="4">
    <location>
        <begin position="289"/>
        <end position="309"/>
    </location>
</feature>
<feature type="topological domain" description="Lumenal" evidence="4">
    <location>
        <begin position="310"/>
        <end position="354"/>
    </location>
</feature>
<feature type="transmembrane region" description="Helical" evidence="4">
    <location>
        <begin position="355"/>
        <end position="375"/>
    </location>
</feature>
<feature type="topological domain" description="Cytoplasmic" evidence="4">
    <location>
        <begin position="376"/>
        <end position="420"/>
    </location>
</feature>
<feature type="transmembrane region" description="Helical" evidence="4">
    <location>
        <begin position="421"/>
        <end position="441"/>
    </location>
</feature>
<feature type="topological domain" description="Lumenal" evidence="4">
    <location>
        <begin position="442"/>
        <end position="445"/>
    </location>
</feature>
<feature type="transmembrane region" description="Helical" evidence="4">
    <location>
        <begin position="446"/>
        <end position="462"/>
    </location>
</feature>
<feature type="topological domain" description="Cytoplasmic" evidence="4">
    <location>
        <begin position="463"/>
        <end position="476"/>
    </location>
</feature>
<protein>
    <recommendedName>
        <fullName>Protein transport protein Sec61 subunit alpha</fullName>
    </recommendedName>
</protein>
<name>SC61A_DISMA</name>
<evidence type="ECO:0000250" key="1"/>
<evidence type="ECO:0000250" key="2">
    <source>
        <dbReference type="UniProtKB" id="P38377"/>
    </source>
</evidence>
<evidence type="ECO:0000250" key="3">
    <source>
        <dbReference type="UniProtKB" id="P61619"/>
    </source>
</evidence>
<evidence type="ECO:0000255" key="4"/>
<evidence type="ECO:0000305" key="5"/>
<comment type="function">
    <text evidence="3">Component of SEC61 channel-forming translocon complex that mediates transport of signal peptide-containing precursor polypeptides across the endoplasmic reticulum (ER). Forms a ribosome receptor and a gated pore in the ER membrane, both functions required for cotranslational translocation of nascent polypeptides. May cooperate with auxiliary protein SEC62, SEC63 and HSPA5/BiP to enable post-translational transport of small presecretory proteins. The SEC61 channel is also involved in ER membrane insertion of transmembrane proteins: it mediates membrane insertion of the first few transmembrane segments of proteins, while insertion of subsequent transmembrane regions of multi-pass membrane proteins is mediated by the multi-pass translocon (MPT) complex.</text>
</comment>
<comment type="subunit">
    <text evidence="2 3">The SEC61 channel-forming translocon complex consists of channel-forming core components SEC61A1, SEC61B and SEC61G and different auxiliary components such as SEC62 and SEC63 (By similarity). The SEC61 channel associates with the multi-pass translocon (MPT) complex (By similarity).</text>
</comment>
<comment type="subcellular location">
    <subcellularLocation>
        <location evidence="3">Endoplasmic reticulum membrane</location>
        <topology evidence="3">Multi-pass membrane protein</topology>
    </subcellularLocation>
</comment>
<comment type="similarity">
    <text evidence="5">Belongs to the SecY/SEC61-alpha family.</text>
</comment>
<organism>
    <name type="scientific">Dissostichus mawsoni</name>
    <name type="common">Antarctic cod</name>
    <dbReference type="NCBI Taxonomy" id="36200"/>
    <lineage>
        <taxon>Eukaryota</taxon>
        <taxon>Metazoa</taxon>
        <taxon>Chordata</taxon>
        <taxon>Craniata</taxon>
        <taxon>Vertebrata</taxon>
        <taxon>Euteleostomi</taxon>
        <taxon>Actinopterygii</taxon>
        <taxon>Neopterygii</taxon>
        <taxon>Teleostei</taxon>
        <taxon>Neoteleostei</taxon>
        <taxon>Acanthomorphata</taxon>
        <taxon>Eupercaria</taxon>
        <taxon>Perciformes</taxon>
        <taxon>Notothenioidei</taxon>
        <taxon>Nototheniidae</taxon>
        <taxon>Dissostichus</taxon>
    </lineage>
</organism>
<gene>
    <name type="primary">sec61a</name>
</gene>
<reference key="1">
    <citation type="journal article" date="2003" name="J. Cell Sci.">
        <title>Protein translocation across the endoplasmic reticulum membrane in cold-adapted organisms.</title>
        <authorList>
            <person name="Romisch K."/>
            <person name="Collie N."/>
            <person name="Soto N."/>
            <person name="Logue J."/>
            <person name="Lindsay M."/>
            <person name="Scheper W."/>
            <person name="Cheng C.-H.C."/>
        </authorList>
    </citation>
    <scope>NUCLEOTIDE SEQUENCE [MRNA]</scope>
    <source>
        <tissue>Liver</tissue>
    </source>
</reference>
<keyword id="KW-0217">Developmental protein</keyword>
<keyword id="KW-0256">Endoplasmic reticulum</keyword>
<keyword id="KW-0472">Membrane</keyword>
<keyword id="KW-0653">Protein transport</keyword>
<keyword id="KW-0811">Translocation</keyword>
<keyword id="KW-0812">Transmembrane</keyword>
<keyword id="KW-1133">Transmembrane helix</keyword>
<keyword id="KW-0813">Transport</keyword>